<reference key="1">
    <citation type="journal article" date="2006" name="Proc. Natl. Acad. Sci. U.S.A.">
        <title>Comparative genomics of the lactic acid bacteria.</title>
        <authorList>
            <person name="Makarova K.S."/>
            <person name="Slesarev A."/>
            <person name="Wolf Y.I."/>
            <person name="Sorokin A."/>
            <person name="Mirkin B."/>
            <person name="Koonin E.V."/>
            <person name="Pavlov A."/>
            <person name="Pavlova N."/>
            <person name="Karamychev V."/>
            <person name="Polouchine N."/>
            <person name="Shakhova V."/>
            <person name="Grigoriev I."/>
            <person name="Lou Y."/>
            <person name="Rohksar D."/>
            <person name="Lucas S."/>
            <person name="Huang K."/>
            <person name="Goodstein D.M."/>
            <person name="Hawkins T."/>
            <person name="Plengvidhya V."/>
            <person name="Welker D."/>
            <person name="Hughes J."/>
            <person name="Goh Y."/>
            <person name="Benson A."/>
            <person name="Baldwin K."/>
            <person name="Lee J.-H."/>
            <person name="Diaz-Muniz I."/>
            <person name="Dosti B."/>
            <person name="Smeianov V."/>
            <person name="Wechter W."/>
            <person name="Barabote R."/>
            <person name="Lorca G."/>
            <person name="Altermann E."/>
            <person name="Barrangou R."/>
            <person name="Ganesan B."/>
            <person name="Xie Y."/>
            <person name="Rawsthorne H."/>
            <person name="Tamir D."/>
            <person name="Parker C."/>
            <person name="Breidt F."/>
            <person name="Broadbent J.R."/>
            <person name="Hutkins R."/>
            <person name="O'Sullivan D."/>
            <person name="Steele J."/>
            <person name="Unlu G."/>
            <person name="Saier M.H. Jr."/>
            <person name="Klaenhammer T."/>
            <person name="Richardson P."/>
            <person name="Kozyavkin S."/>
            <person name="Weimer B.C."/>
            <person name="Mills D.A."/>
        </authorList>
    </citation>
    <scope>NUCLEOTIDE SEQUENCE [LARGE SCALE GENOMIC DNA]</scope>
    <source>
        <strain>ATCC 33323 / DSM 20243 / BCRC 14619 / CIP 102991 / JCM 1131 / KCTC 3163 / NCIMB 11718 / NCTC 13722 / AM63</strain>
    </source>
</reference>
<name>FENR_LACGA</name>
<gene>
    <name type="ordered locus">LGAS_0447</name>
</gene>
<organism>
    <name type="scientific">Lactobacillus gasseri (strain ATCC 33323 / DSM 20243 / BCRC 14619 / CIP 102991 / JCM 1131 / KCTC 3163 / NCIMB 11718 / NCTC 13722 / AM63)</name>
    <dbReference type="NCBI Taxonomy" id="324831"/>
    <lineage>
        <taxon>Bacteria</taxon>
        <taxon>Bacillati</taxon>
        <taxon>Bacillota</taxon>
        <taxon>Bacilli</taxon>
        <taxon>Lactobacillales</taxon>
        <taxon>Lactobacillaceae</taxon>
        <taxon>Lactobacillus</taxon>
    </lineage>
</organism>
<evidence type="ECO:0000255" key="1">
    <source>
        <dbReference type="HAMAP-Rule" id="MF_01685"/>
    </source>
</evidence>
<evidence type="ECO:0000305" key="2"/>
<accession>Q045M0</accession>
<sequence>MEKYDLAIIGAGPIGLFAASFANLHGLKTISFDALDEIGGQINMLYPQKNIKDIPAFPSIKGKKLVSQLLEQNINTKFILSHKVKEISFLENENILVDKKYEVKSLLIATGLGAFKPKTLPLSTTLDVNQHIHYSMQHPEIFANKKVAILGGGDSALDWALELANTSDVFLIHRRNEFRGLESSVNKLKSLKNVELLTPYLPKDLQLNNNRMELVLHKVGASQDFVTKNVDEILVAYGFKSDNRQLRKWGIKLDHNLIAVSQKMHTNLPHVYAIGDAITYPGRVPMIALGFGEAQIAISNIMQDLFPEKTMTFHSTSI</sequence>
<dbReference type="EC" id="1.18.1.2" evidence="1"/>
<dbReference type="EMBL" id="CP000413">
    <property type="protein sequence ID" value="ABJ59852.1"/>
    <property type="status" value="ALT_INIT"/>
    <property type="molecule type" value="Genomic_DNA"/>
</dbReference>
<dbReference type="SMR" id="Q045M0"/>
<dbReference type="KEGG" id="lga:LGAS_0447"/>
<dbReference type="HOGENOM" id="CLU_031864_5_5_9"/>
<dbReference type="BioCyc" id="LGAS324831:G1G6Y-447-MONOMER"/>
<dbReference type="Proteomes" id="UP000000664">
    <property type="component" value="Chromosome"/>
</dbReference>
<dbReference type="GO" id="GO:0004324">
    <property type="term" value="F:ferredoxin-NADP+ reductase activity"/>
    <property type="evidence" value="ECO:0007669"/>
    <property type="project" value="UniProtKB-UniRule"/>
</dbReference>
<dbReference type="GO" id="GO:0050660">
    <property type="term" value="F:flavin adenine dinucleotide binding"/>
    <property type="evidence" value="ECO:0007669"/>
    <property type="project" value="UniProtKB-UniRule"/>
</dbReference>
<dbReference type="GO" id="GO:0050661">
    <property type="term" value="F:NADP binding"/>
    <property type="evidence" value="ECO:0007669"/>
    <property type="project" value="UniProtKB-UniRule"/>
</dbReference>
<dbReference type="Gene3D" id="3.50.50.60">
    <property type="entry name" value="FAD/NAD(P)-binding domain"/>
    <property type="match status" value="2"/>
</dbReference>
<dbReference type="HAMAP" id="MF_01685">
    <property type="entry name" value="FENR2"/>
    <property type="match status" value="1"/>
</dbReference>
<dbReference type="InterPro" id="IPR036188">
    <property type="entry name" value="FAD/NAD-bd_sf"/>
</dbReference>
<dbReference type="InterPro" id="IPR023753">
    <property type="entry name" value="FAD/NAD-binding_dom"/>
</dbReference>
<dbReference type="InterPro" id="IPR022890">
    <property type="entry name" value="Fd--NADP_Rdtase_type_2"/>
</dbReference>
<dbReference type="InterPro" id="IPR050097">
    <property type="entry name" value="Ferredoxin-NADP_redctase_2"/>
</dbReference>
<dbReference type="PANTHER" id="PTHR48105">
    <property type="entry name" value="THIOREDOXIN REDUCTASE 1-RELATED-RELATED"/>
    <property type="match status" value="1"/>
</dbReference>
<dbReference type="Pfam" id="PF07992">
    <property type="entry name" value="Pyr_redox_2"/>
    <property type="match status" value="1"/>
</dbReference>
<dbReference type="PRINTS" id="PR00368">
    <property type="entry name" value="FADPNR"/>
</dbReference>
<dbReference type="PRINTS" id="PR00469">
    <property type="entry name" value="PNDRDTASEII"/>
</dbReference>
<dbReference type="SUPFAM" id="SSF51905">
    <property type="entry name" value="FAD/NAD(P)-binding domain"/>
    <property type="match status" value="1"/>
</dbReference>
<protein>
    <recommendedName>
        <fullName evidence="1">Ferredoxin--NADP reductase</fullName>
        <shortName evidence="1">FNR</shortName>
        <shortName evidence="1">Fd-NADP(+) reductase</shortName>
        <ecNumber evidence="1">1.18.1.2</ecNumber>
    </recommendedName>
</protein>
<keyword id="KW-0274">FAD</keyword>
<keyword id="KW-0285">Flavoprotein</keyword>
<keyword id="KW-0521">NADP</keyword>
<keyword id="KW-0560">Oxidoreductase</keyword>
<feature type="chain" id="PRO_0000364854" description="Ferredoxin--NADP reductase">
    <location>
        <begin position="1"/>
        <end position="318"/>
    </location>
</feature>
<feature type="binding site" evidence="1">
    <location>
        <position position="33"/>
    </location>
    <ligand>
        <name>FAD</name>
        <dbReference type="ChEBI" id="CHEBI:57692"/>
    </ligand>
</feature>
<feature type="binding site" evidence="1">
    <location>
        <position position="41"/>
    </location>
    <ligand>
        <name>FAD</name>
        <dbReference type="ChEBI" id="CHEBI:57692"/>
    </ligand>
</feature>
<feature type="binding site" evidence="1">
    <location>
        <position position="46"/>
    </location>
    <ligand>
        <name>FAD</name>
        <dbReference type="ChEBI" id="CHEBI:57692"/>
    </ligand>
</feature>
<feature type="binding site" evidence="1">
    <location>
        <position position="84"/>
    </location>
    <ligand>
        <name>FAD</name>
        <dbReference type="ChEBI" id="CHEBI:57692"/>
    </ligand>
</feature>
<feature type="binding site" evidence="1">
    <location>
        <position position="115"/>
    </location>
    <ligand>
        <name>FAD</name>
        <dbReference type="ChEBI" id="CHEBI:57692"/>
    </ligand>
</feature>
<feature type="binding site" evidence="1">
    <location>
        <position position="276"/>
    </location>
    <ligand>
        <name>FAD</name>
        <dbReference type="ChEBI" id="CHEBI:57692"/>
    </ligand>
</feature>
<feature type="binding site" evidence="1">
    <location>
        <position position="316"/>
    </location>
    <ligand>
        <name>FAD</name>
        <dbReference type="ChEBI" id="CHEBI:57692"/>
    </ligand>
</feature>
<proteinExistence type="inferred from homology"/>
<comment type="catalytic activity">
    <reaction evidence="1">
        <text>2 reduced [2Fe-2S]-[ferredoxin] + NADP(+) + H(+) = 2 oxidized [2Fe-2S]-[ferredoxin] + NADPH</text>
        <dbReference type="Rhea" id="RHEA:20125"/>
        <dbReference type="Rhea" id="RHEA-COMP:10000"/>
        <dbReference type="Rhea" id="RHEA-COMP:10001"/>
        <dbReference type="ChEBI" id="CHEBI:15378"/>
        <dbReference type="ChEBI" id="CHEBI:33737"/>
        <dbReference type="ChEBI" id="CHEBI:33738"/>
        <dbReference type="ChEBI" id="CHEBI:57783"/>
        <dbReference type="ChEBI" id="CHEBI:58349"/>
        <dbReference type="EC" id="1.18.1.2"/>
    </reaction>
</comment>
<comment type="cofactor">
    <cofactor evidence="1">
        <name>FAD</name>
        <dbReference type="ChEBI" id="CHEBI:57692"/>
    </cofactor>
    <text evidence="1">Binds 1 FAD per subunit.</text>
</comment>
<comment type="subunit">
    <text evidence="1">Homodimer.</text>
</comment>
<comment type="similarity">
    <text evidence="1">Belongs to the ferredoxin--NADP reductase type 2 family.</text>
</comment>
<comment type="sequence caution" evidence="2">
    <conflict type="erroneous initiation">
        <sequence resource="EMBL-CDS" id="ABJ59852"/>
    </conflict>
</comment>